<name>MURG_PROMH</name>
<reference key="1">
    <citation type="journal article" date="2008" name="J. Bacteriol.">
        <title>Complete genome sequence of uropathogenic Proteus mirabilis, a master of both adherence and motility.</title>
        <authorList>
            <person name="Pearson M.M."/>
            <person name="Sebaihia M."/>
            <person name="Churcher C."/>
            <person name="Quail M.A."/>
            <person name="Seshasayee A.S."/>
            <person name="Luscombe N.M."/>
            <person name="Abdellah Z."/>
            <person name="Arrosmith C."/>
            <person name="Atkin B."/>
            <person name="Chillingworth T."/>
            <person name="Hauser H."/>
            <person name="Jagels K."/>
            <person name="Moule S."/>
            <person name="Mungall K."/>
            <person name="Norbertczak H."/>
            <person name="Rabbinowitsch E."/>
            <person name="Walker D."/>
            <person name="Whithead S."/>
            <person name="Thomson N.R."/>
            <person name="Rather P.N."/>
            <person name="Parkhill J."/>
            <person name="Mobley H.L.T."/>
        </authorList>
    </citation>
    <scope>NUCLEOTIDE SEQUENCE [LARGE SCALE GENOMIC DNA]</scope>
    <source>
        <strain>HI4320</strain>
    </source>
</reference>
<gene>
    <name evidence="1" type="primary">murG</name>
    <name type="ordered locus">PMI2070</name>
</gene>
<comment type="function">
    <text evidence="1">Cell wall formation. Catalyzes the transfer of a GlcNAc subunit on undecaprenyl-pyrophosphoryl-MurNAc-pentapeptide (lipid intermediate I) to form undecaprenyl-pyrophosphoryl-MurNAc-(pentapeptide)GlcNAc (lipid intermediate II).</text>
</comment>
<comment type="catalytic activity">
    <reaction evidence="1">
        <text>di-trans,octa-cis-undecaprenyl diphospho-N-acetyl-alpha-D-muramoyl-L-alanyl-D-glutamyl-meso-2,6-diaminopimeloyl-D-alanyl-D-alanine + UDP-N-acetyl-alpha-D-glucosamine = di-trans,octa-cis-undecaprenyl diphospho-[N-acetyl-alpha-D-glucosaminyl-(1-&gt;4)]-N-acetyl-alpha-D-muramoyl-L-alanyl-D-glutamyl-meso-2,6-diaminopimeloyl-D-alanyl-D-alanine + UDP + H(+)</text>
        <dbReference type="Rhea" id="RHEA:31227"/>
        <dbReference type="ChEBI" id="CHEBI:15378"/>
        <dbReference type="ChEBI" id="CHEBI:57705"/>
        <dbReference type="ChEBI" id="CHEBI:58223"/>
        <dbReference type="ChEBI" id="CHEBI:61387"/>
        <dbReference type="ChEBI" id="CHEBI:61388"/>
        <dbReference type="EC" id="2.4.1.227"/>
    </reaction>
</comment>
<comment type="pathway">
    <text evidence="1">Cell wall biogenesis; peptidoglycan biosynthesis.</text>
</comment>
<comment type="subcellular location">
    <subcellularLocation>
        <location evidence="1">Cell inner membrane</location>
        <topology evidence="1">Peripheral membrane protein</topology>
        <orientation evidence="1">Cytoplasmic side</orientation>
    </subcellularLocation>
</comment>
<comment type="similarity">
    <text evidence="1">Belongs to the glycosyltransferase 28 family. MurG subfamily.</text>
</comment>
<feature type="chain" id="PRO_1000090461" description="UDP-N-acetylglucosamine--N-acetylmuramyl-(pentapeptide) pyrophosphoryl-undecaprenol N-acetylglucosamine transferase">
    <location>
        <begin position="1"/>
        <end position="360"/>
    </location>
</feature>
<feature type="binding site" evidence="1">
    <location>
        <begin position="15"/>
        <end position="17"/>
    </location>
    <ligand>
        <name>UDP-N-acetyl-alpha-D-glucosamine</name>
        <dbReference type="ChEBI" id="CHEBI:57705"/>
    </ligand>
</feature>
<feature type="binding site" evidence="1">
    <location>
        <position position="127"/>
    </location>
    <ligand>
        <name>UDP-N-acetyl-alpha-D-glucosamine</name>
        <dbReference type="ChEBI" id="CHEBI:57705"/>
    </ligand>
</feature>
<feature type="binding site" evidence="1">
    <location>
        <position position="163"/>
    </location>
    <ligand>
        <name>UDP-N-acetyl-alpha-D-glucosamine</name>
        <dbReference type="ChEBI" id="CHEBI:57705"/>
    </ligand>
</feature>
<feature type="binding site" evidence="1">
    <location>
        <position position="191"/>
    </location>
    <ligand>
        <name>UDP-N-acetyl-alpha-D-glucosamine</name>
        <dbReference type="ChEBI" id="CHEBI:57705"/>
    </ligand>
</feature>
<feature type="binding site" evidence="1">
    <location>
        <position position="249"/>
    </location>
    <ligand>
        <name>UDP-N-acetyl-alpha-D-glucosamine</name>
        <dbReference type="ChEBI" id="CHEBI:57705"/>
    </ligand>
</feature>
<feature type="binding site" evidence="1">
    <location>
        <begin position="268"/>
        <end position="273"/>
    </location>
    <ligand>
        <name>UDP-N-acetyl-alpha-D-glucosamine</name>
        <dbReference type="ChEBI" id="CHEBI:57705"/>
    </ligand>
</feature>
<feature type="binding site" evidence="1">
    <location>
        <position position="293"/>
    </location>
    <ligand>
        <name>UDP-N-acetyl-alpha-D-glucosamine</name>
        <dbReference type="ChEBI" id="CHEBI:57705"/>
    </ligand>
</feature>
<evidence type="ECO:0000255" key="1">
    <source>
        <dbReference type="HAMAP-Rule" id="MF_00033"/>
    </source>
</evidence>
<protein>
    <recommendedName>
        <fullName evidence="1">UDP-N-acetylglucosamine--N-acetylmuramyl-(pentapeptide) pyrophosphoryl-undecaprenol N-acetylglucosamine transferase</fullName>
        <ecNumber evidence="1">2.4.1.227</ecNumber>
    </recommendedName>
    <alternativeName>
        <fullName evidence="1">Undecaprenyl-PP-MurNAc-pentapeptide-UDPGlcNAc GlcNAc transferase</fullName>
    </alternativeName>
</protein>
<proteinExistence type="inferred from homology"/>
<dbReference type="EC" id="2.4.1.227" evidence="1"/>
<dbReference type="EMBL" id="AM942759">
    <property type="protein sequence ID" value="CAR44147.1"/>
    <property type="molecule type" value="Genomic_DNA"/>
</dbReference>
<dbReference type="RefSeq" id="WP_004244116.1">
    <property type="nucleotide sequence ID" value="NC_010554.1"/>
</dbReference>
<dbReference type="SMR" id="B4F111"/>
<dbReference type="CAZy" id="GT28">
    <property type="family name" value="Glycosyltransferase Family 28"/>
</dbReference>
<dbReference type="EnsemblBacteria" id="CAR44147">
    <property type="protein sequence ID" value="CAR44147"/>
    <property type="gene ID" value="PMI2070"/>
</dbReference>
<dbReference type="GeneID" id="6801669"/>
<dbReference type="KEGG" id="pmr:PMI2070"/>
<dbReference type="eggNOG" id="COG0707">
    <property type="taxonomic scope" value="Bacteria"/>
</dbReference>
<dbReference type="HOGENOM" id="CLU_037404_2_0_6"/>
<dbReference type="UniPathway" id="UPA00219"/>
<dbReference type="Proteomes" id="UP000008319">
    <property type="component" value="Chromosome"/>
</dbReference>
<dbReference type="GO" id="GO:0005886">
    <property type="term" value="C:plasma membrane"/>
    <property type="evidence" value="ECO:0007669"/>
    <property type="project" value="UniProtKB-SubCell"/>
</dbReference>
<dbReference type="GO" id="GO:0051991">
    <property type="term" value="F:UDP-N-acetyl-D-glucosamine:N-acetylmuramoyl-L-alanyl-D-glutamyl-meso-2,6-diaminopimelyl-D-alanyl-D-alanine-diphosphoundecaprenol 4-beta-N-acetylglucosaminlytransferase activity"/>
    <property type="evidence" value="ECO:0007669"/>
    <property type="project" value="RHEA"/>
</dbReference>
<dbReference type="GO" id="GO:0050511">
    <property type="term" value="F:undecaprenyldiphospho-muramoylpentapeptide beta-N-acetylglucosaminyltransferase activity"/>
    <property type="evidence" value="ECO:0007669"/>
    <property type="project" value="UniProtKB-UniRule"/>
</dbReference>
<dbReference type="GO" id="GO:0005975">
    <property type="term" value="P:carbohydrate metabolic process"/>
    <property type="evidence" value="ECO:0007669"/>
    <property type="project" value="InterPro"/>
</dbReference>
<dbReference type="GO" id="GO:0051301">
    <property type="term" value="P:cell division"/>
    <property type="evidence" value="ECO:0007669"/>
    <property type="project" value="UniProtKB-KW"/>
</dbReference>
<dbReference type="GO" id="GO:0071555">
    <property type="term" value="P:cell wall organization"/>
    <property type="evidence" value="ECO:0007669"/>
    <property type="project" value="UniProtKB-KW"/>
</dbReference>
<dbReference type="GO" id="GO:0030259">
    <property type="term" value="P:lipid glycosylation"/>
    <property type="evidence" value="ECO:0007669"/>
    <property type="project" value="UniProtKB-UniRule"/>
</dbReference>
<dbReference type="GO" id="GO:0009252">
    <property type="term" value="P:peptidoglycan biosynthetic process"/>
    <property type="evidence" value="ECO:0007669"/>
    <property type="project" value="UniProtKB-UniRule"/>
</dbReference>
<dbReference type="GO" id="GO:0008360">
    <property type="term" value="P:regulation of cell shape"/>
    <property type="evidence" value="ECO:0007669"/>
    <property type="project" value="UniProtKB-KW"/>
</dbReference>
<dbReference type="CDD" id="cd03785">
    <property type="entry name" value="GT28_MurG"/>
    <property type="match status" value="1"/>
</dbReference>
<dbReference type="FunFam" id="3.40.50.2000:FF:000016">
    <property type="entry name" value="UDP-N-acetylglucosamine--N-acetylmuramyl-(pentapeptide) pyrophosphoryl-undecaprenol N-acetylglucosamine transferase"/>
    <property type="match status" value="1"/>
</dbReference>
<dbReference type="Gene3D" id="3.40.50.2000">
    <property type="entry name" value="Glycogen Phosphorylase B"/>
    <property type="match status" value="2"/>
</dbReference>
<dbReference type="HAMAP" id="MF_00033">
    <property type="entry name" value="MurG"/>
    <property type="match status" value="1"/>
</dbReference>
<dbReference type="InterPro" id="IPR006009">
    <property type="entry name" value="GlcNAc_MurG"/>
</dbReference>
<dbReference type="InterPro" id="IPR007235">
    <property type="entry name" value="Glyco_trans_28_C"/>
</dbReference>
<dbReference type="InterPro" id="IPR004276">
    <property type="entry name" value="GlycoTrans_28_N"/>
</dbReference>
<dbReference type="NCBIfam" id="TIGR01133">
    <property type="entry name" value="murG"/>
    <property type="match status" value="1"/>
</dbReference>
<dbReference type="PANTHER" id="PTHR21015:SF22">
    <property type="entry name" value="GLYCOSYLTRANSFERASE"/>
    <property type="match status" value="1"/>
</dbReference>
<dbReference type="PANTHER" id="PTHR21015">
    <property type="entry name" value="UDP-N-ACETYLGLUCOSAMINE--N-ACETYLMURAMYL-(PENTAPEPTIDE) PYROPHOSPHORYL-UNDECAPRENOL N-ACETYLGLUCOSAMINE TRANSFERASE 1"/>
    <property type="match status" value="1"/>
</dbReference>
<dbReference type="Pfam" id="PF04101">
    <property type="entry name" value="Glyco_tran_28_C"/>
    <property type="match status" value="1"/>
</dbReference>
<dbReference type="Pfam" id="PF03033">
    <property type="entry name" value="Glyco_transf_28"/>
    <property type="match status" value="1"/>
</dbReference>
<dbReference type="SUPFAM" id="SSF53756">
    <property type="entry name" value="UDP-Glycosyltransferase/glycogen phosphorylase"/>
    <property type="match status" value="1"/>
</dbReference>
<organism>
    <name type="scientific">Proteus mirabilis (strain HI4320)</name>
    <dbReference type="NCBI Taxonomy" id="529507"/>
    <lineage>
        <taxon>Bacteria</taxon>
        <taxon>Pseudomonadati</taxon>
        <taxon>Pseudomonadota</taxon>
        <taxon>Gammaproteobacteria</taxon>
        <taxon>Enterobacterales</taxon>
        <taxon>Morganellaceae</taxon>
        <taxon>Proteus</taxon>
    </lineage>
</organism>
<keyword id="KW-0131">Cell cycle</keyword>
<keyword id="KW-0132">Cell division</keyword>
<keyword id="KW-0997">Cell inner membrane</keyword>
<keyword id="KW-1003">Cell membrane</keyword>
<keyword id="KW-0133">Cell shape</keyword>
<keyword id="KW-0961">Cell wall biogenesis/degradation</keyword>
<keyword id="KW-0328">Glycosyltransferase</keyword>
<keyword id="KW-0472">Membrane</keyword>
<keyword id="KW-0573">Peptidoglycan synthesis</keyword>
<keyword id="KW-1185">Reference proteome</keyword>
<keyword id="KW-0808">Transferase</keyword>
<accession>B4F111</accession>
<sequence length="360" mass="39232">MSERKRRLMVMAGGTGGHVFPGLAVAHYLQSQGWDIRWLGTADRMEAQLVPKHGIEIEYIRISGLRGKGVKALIAAPIRIIKAIFQARRIMKRYQPDAVLGMGGYVSGPGGVAAWSCGIPVVLHEQNGIAGLTNRWLSKIAKRVLQAFPGAFANAPVVGNPVRDDVLALEAPAERLKGREGAVRVLVIGGSQGARILNHTMPVVAGLLGERVTIWHQAGKGSESDTKLRYQNELSKNSVKSEYKVTEFIDDIAQAYQWADVVVCRSGALTVSEIAAAGLPAIFVPFQHKDRQQYWNALPLENAGAARIIEQNDLTPEAIADTLENWDRHQLMLMAEKAQSVAITDATERVANVIIEVAKK</sequence>